<sequence>MEIILVGHAHTAKAFKEAVEMIYGEVPNFHPIDFTPKEGLQSLTDKIVSAIEPGKTASTLIITDLFSGTPYNASAELVLKKKAADVVAGMCLPMLLEVAVNANNMSVSQLVSHLMKIKEEFSTSLSEKMTTNAKEDDF</sequence>
<reference key="1">
    <citation type="journal article" date="2000" name="J. Bacteriol.">
        <title>Genetics of L-sorbose transport and metabolism in Lactobacillus casei.</title>
        <authorList>
            <person name="Yebra M.J."/>
            <person name="Veyrat A."/>
            <person name="Santos M.A."/>
            <person name="Perez-Martinez G."/>
        </authorList>
    </citation>
    <scope>NUCLEOTIDE SEQUENCE [GENOMIC DNA]</scope>
    <scope>FUNCTION</scope>
    <scope>CATALYTIC ACTIVITY</scope>
    <scope>SUBCELLULAR LOCATION</scope>
    <scope>INDUCTION</scope>
    <scope>PHOSPHORYLATION AT HIS-8</scope>
    <source>
        <strain>ATCC 393 / DSM 20011 / JCM 1134 / BCRC 10697 / CCUG 21451 / NBRC 15883 / NCIMB 11970 / NCDO 161 / WDCM 00100</strain>
    </source>
</reference>
<accession>Q9RGG5</accession>
<accession>F2M4U9</accession>
<comment type="function">
    <text evidence="2">The phosphoenolpyruvate-dependent sugar phosphotransferase system (PTS), a major carbohydrate active transport system, catalyzes the phosphorylation of incoming sugar substrates concomitant with their translocation across the cell membrane. The enzyme II SorABCD PTS system is involved in L-sorbose transport.</text>
</comment>
<comment type="subcellular location">
    <subcellularLocation>
        <location evidence="4">Cytoplasm</location>
    </subcellularLocation>
</comment>
<comment type="induction">
    <text evidence="2">Induced by L-sorbose and repressed by D-glucose.</text>
</comment>
<comment type="domain">
    <text evidence="1">The EIIA type-4 domain is phosphorylated by phospho-HPr on a histidyl residue. Then, it transfers the phosphoryl group to the EIIB type-4 domain.</text>
</comment>
<dbReference type="EMBL" id="AF129168">
    <property type="protein sequence ID" value="AAF24131.1"/>
    <property type="molecule type" value="Genomic_DNA"/>
</dbReference>
<dbReference type="SMR" id="Q9RGG5"/>
<dbReference type="TCDB" id="4.A.6.1.26">
    <property type="family name" value="the pts mannose-fructose-sorbose (man) family"/>
</dbReference>
<dbReference type="iPTMnet" id="Q9RGG5"/>
<dbReference type="eggNOG" id="COG2893">
    <property type="taxonomic scope" value="Bacteria"/>
</dbReference>
<dbReference type="OMA" id="GHAHTAK"/>
<dbReference type="BRENDA" id="2.7.1.206">
    <property type="organism ID" value="2854"/>
</dbReference>
<dbReference type="GO" id="GO:0005737">
    <property type="term" value="C:cytoplasm"/>
    <property type="evidence" value="ECO:0007669"/>
    <property type="project" value="UniProtKB-SubCell"/>
</dbReference>
<dbReference type="GO" id="GO:0016020">
    <property type="term" value="C:membrane"/>
    <property type="evidence" value="ECO:0007669"/>
    <property type="project" value="InterPro"/>
</dbReference>
<dbReference type="GO" id="GO:0016301">
    <property type="term" value="F:kinase activity"/>
    <property type="evidence" value="ECO:0007669"/>
    <property type="project" value="UniProtKB-KW"/>
</dbReference>
<dbReference type="GO" id="GO:0016773">
    <property type="term" value="F:phosphotransferase activity, alcohol group as acceptor"/>
    <property type="evidence" value="ECO:0007669"/>
    <property type="project" value="InterPro"/>
</dbReference>
<dbReference type="GO" id="GO:0009401">
    <property type="term" value="P:phosphoenolpyruvate-dependent sugar phosphotransferase system"/>
    <property type="evidence" value="ECO:0007669"/>
    <property type="project" value="UniProtKB-KW"/>
</dbReference>
<dbReference type="CDD" id="cd00006">
    <property type="entry name" value="PTS_IIA_man"/>
    <property type="match status" value="1"/>
</dbReference>
<dbReference type="Gene3D" id="3.40.50.510">
    <property type="entry name" value="Phosphotransferase system, mannose-type IIA component"/>
    <property type="match status" value="1"/>
</dbReference>
<dbReference type="InterPro" id="IPR051471">
    <property type="entry name" value="Bacterial_PTS_sugar_comp"/>
</dbReference>
<dbReference type="InterPro" id="IPR013789">
    <property type="entry name" value="PTS_EIIA_man"/>
</dbReference>
<dbReference type="InterPro" id="IPR004701">
    <property type="entry name" value="PTS_EIIA_man-typ"/>
</dbReference>
<dbReference type="InterPro" id="IPR036662">
    <property type="entry name" value="PTS_EIIA_man-typ_sf"/>
</dbReference>
<dbReference type="InterPro" id="IPR033887">
    <property type="entry name" value="PTS_IIA_man"/>
</dbReference>
<dbReference type="NCBIfam" id="TIGR00824">
    <property type="entry name" value="EIIA-man"/>
    <property type="match status" value="1"/>
</dbReference>
<dbReference type="PANTHER" id="PTHR33799">
    <property type="entry name" value="PTS PERMEASE-RELATED-RELATED"/>
    <property type="match status" value="1"/>
</dbReference>
<dbReference type="PANTHER" id="PTHR33799:SF1">
    <property type="entry name" value="PTS SYSTEM MANNOSE-SPECIFIC EIIAB COMPONENT-RELATED"/>
    <property type="match status" value="1"/>
</dbReference>
<dbReference type="Pfam" id="PF03610">
    <property type="entry name" value="EIIA-man"/>
    <property type="match status" value="1"/>
</dbReference>
<dbReference type="SUPFAM" id="SSF53062">
    <property type="entry name" value="PTS system fructose IIA component-like"/>
    <property type="match status" value="1"/>
</dbReference>
<dbReference type="PROSITE" id="PS51096">
    <property type="entry name" value="PTS_EIIA_TYPE_4"/>
    <property type="match status" value="1"/>
</dbReference>
<gene>
    <name evidence="3" type="primary">sorA</name>
</gene>
<proteinExistence type="evidence at protein level"/>
<feature type="chain" id="PRO_0000437530" description="PTS system sorbose-specific EIIA component">
    <location>
        <begin position="1"/>
        <end position="138"/>
    </location>
</feature>
<feature type="domain" description="PTS EIIA type-4" evidence="1">
    <location>
        <begin position="1"/>
        <end position="125"/>
    </location>
</feature>
<feature type="active site" description="Tele-phosphohistidine intermediate" evidence="1 4">
    <location>
        <position position="8"/>
    </location>
</feature>
<feature type="modified residue" description="Phosphohistidine; by HPr" evidence="4">
    <location>
        <position position="8"/>
    </location>
</feature>
<organism>
    <name type="scientific">Lacticaseibacillus casei</name>
    <name type="common">Lactobacillus casei</name>
    <dbReference type="NCBI Taxonomy" id="1582"/>
    <lineage>
        <taxon>Bacteria</taxon>
        <taxon>Bacillati</taxon>
        <taxon>Bacillota</taxon>
        <taxon>Bacilli</taxon>
        <taxon>Lactobacillales</taxon>
        <taxon>Lactobacillaceae</taxon>
        <taxon>Lacticaseibacillus</taxon>
    </lineage>
</organism>
<name>PTRA_LACCA</name>
<keyword id="KW-0963">Cytoplasm</keyword>
<keyword id="KW-0418">Kinase</keyword>
<keyword id="KW-0597">Phosphoprotein</keyword>
<keyword id="KW-0598">Phosphotransferase system</keyword>
<keyword id="KW-0762">Sugar transport</keyword>
<keyword id="KW-0808">Transferase</keyword>
<keyword id="KW-0813">Transport</keyword>
<evidence type="ECO:0000255" key="1">
    <source>
        <dbReference type="PROSITE-ProRule" id="PRU00419"/>
    </source>
</evidence>
<evidence type="ECO:0000269" key="2">
    <source>
    </source>
</evidence>
<evidence type="ECO:0000303" key="3">
    <source>
    </source>
</evidence>
<evidence type="ECO:0000305" key="4">
    <source>
    </source>
</evidence>
<protein>
    <recommendedName>
        <fullName evidence="3">PTS system sorbose-specific EIIA component</fullName>
    </recommendedName>
    <alternativeName>
        <fullName evidence="3">EIIA-Sor</fullName>
    </alternativeName>
    <alternativeName>
        <fullName evidence="3">Sorbose-specific phosphotransferase enzyme IIA component</fullName>
    </alternativeName>
</protein>